<name>PP343_ARATH</name>
<protein>
    <recommendedName>
        <fullName>Pentatricopeptide repeat-containing protein At4g31070, mitochondrial</fullName>
    </recommendedName>
</protein>
<reference key="1">
    <citation type="journal article" date="1999" name="Nature">
        <title>Sequence and analysis of chromosome 4 of the plant Arabidopsis thaliana.</title>
        <authorList>
            <person name="Mayer K.F.X."/>
            <person name="Schueller C."/>
            <person name="Wambutt R."/>
            <person name="Murphy G."/>
            <person name="Volckaert G."/>
            <person name="Pohl T."/>
            <person name="Duesterhoeft A."/>
            <person name="Stiekema W."/>
            <person name="Entian K.-D."/>
            <person name="Terryn N."/>
            <person name="Harris B."/>
            <person name="Ansorge W."/>
            <person name="Brandt P."/>
            <person name="Grivell L.A."/>
            <person name="Rieger M."/>
            <person name="Weichselgartner M."/>
            <person name="de Simone V."/>
            <person name="Obermaier B."/>
            <person name="Mache R."/>
            <person name="Mueller M."/>
            <person name="Kreis M."/>
            <person name="Delseny M."/>
            <person name="Puigdomenech P."/>
            <person name="Watson M."/>
            <person name="Schmidtheini T."/>
            <person name="Reichert B."/>
            <person name="Portetelle D."/>
            <person name="Perez-Alonso M."/>
            <person name="Boutry M."/>
            <person name="Bancroft I."/>
            <person name="Vos P."/>
            <person name="Hoheisel J."/>
            <person name="Zimmermann W."/>
            <person name="Wedler H."/>
            <person name="Ridley P."/>
            <person name="Langham S.-A."/>
            <person name="McCullagh B."/>
            <person name="Bilham L."/>
            <person name="Robben J."/>
            <person name="van der Schueren J."/>
            <person name="Grymonprez B."/>
            <person name="Chuang Y.-J."/>
            <person name="Vandenbussche F."/>
            <person name="Braeken M."/>
            <person name="Weltjens I."/>
            <person name="Voet M."/>
            <person name="Bastiaens I."/>
            <person name="Aert R."/>
            <person name="Defoor E."/>
            <person name="Weitzenegger T."/>
            <person name="Bothe G."/>
            <person name="Ramsperger U."/>
            <person name="Hilbert H."/>
            <person name="Braun M."/>
            <person name="Holzer E."/>
            <person name="Brandt A."/>
            <person name="Peters S."/>
            <person name="van Staveren M."/>
            <person name="Dirkse W."/>
            <person name="Mooijman P."/>
            <person name="Klein Lankhorst R."/>
            <person name="Rose M."/>
            <person name="Hauf J."/>
            <person name="Koetter P."/>
            <person name="Berneiser S."/>
            <person name="Hempel S."/>
            <person name="Feldpausch M."/>
            <person name="Lamberth S."/>
            <person name="Van den Daele H."/>
            <person name="De Keyser A."/>
            <person name="Buysshaert C."/>
            <person name="Gielen J."/>
            <person name="Villarroel R."/>
            <person name="De Clercq R."/>
            <person name="van Montagu M."/>
            <person name="Rogers J."/>
            <person name="Cronin A."/>
            <person name="Quail M.A."/>
            <person name="Bray-Allen S."/>
            <person name="Clark L."/>
            <person name="Doggett J."/>
            <person name="Hall S."/>
            <person name="Kay M."/>
            <person name="Lennard N."/>
            <person name="McLay K."/>
            <person name="Mayes R."/>
            <person name="Pettett A."/>
            <person name="Rajandream M.A."/>
            <person name="Lyne M."/>
            <person name="Benes V."/>
            <person name="Rechmann S."/>
            <person name="Borkova D."/>
            <person name="Bloecker H."/>
            <person name="Scharfe M."/>
            <person name="Grimm M."/>
            <person name="Loehnert T.-H."/>
            <person name="Dose S."/>
            <person name="de Haan M."/>
            <person name="Maarse A.C."/>
            <person name="Schaefer M."/>
            <person name="Mueller-Auer S."/>
            <person name="Gabel C."/>
            <person name="Fuchs M."/>
            <person name="Fartmann B."/>
            <person name="Granderath K."/>
            <person name="Dauner D."/>
            <person name="Herzl A."/>
            <person name="Neumann S."/>
            <person name="Argiriou A."/>
            <person name="Vitale D."/>
            <person name="Liguori R."/>
            <person name="Piravandi E."/>
            <person name="Massenet O."/>
            <person name="Quigley F."/>
            <person name="Clabauld G."/>
            <person name="Muendlein A."/>
            <person name="Felber R."/>
            <person name="Schnabl S."/>
            <person name="Hiller R."/>
            <person name="Schmidt W."/>
            <person name="Lecharny A."/>
            <person name="Aubourg S."/>
            <person name="Chefdor F."/>
            <person name="Cooke R."/>
            <person name="Berger C."/>
            <person name="Monfort A."/>
            <person name="Casacuberta E."/>
            <person name="Gibbons T."/>
            <person name="Weber N."/>
            <person name="Vandenbol M."/>
            <person name="Bargues M."/>
            <person name="Terol J."/>
            <person name="Torres A."/>
            <person name="Perez-Perez A."/>
            <person name="Purnelle B."/>
            <person name="Bent E."/>
            <person name="Johnson S."/>
            <person name="Tacon D."/>
            <person name="Jesse T."/>
            <person name="Heijnen L."/>
            <person name="Schwarz S."/>
            <person name="Scholler P."/>
            <person name="Heber S."/>
            <person name="Francs P."/>
            <person name="Bielke C."/>
            <person name="Frishman D."/>
            <person name="Haase D."/>
            <person name="Lemcke K."/>
            <person name="Mewes H.-W."/>
            <person name="Stocker S."/>
            <person name="Zaccaria P."/>
            <person name="Bevan M."/>
            <person name="Wilson R.K."/>
            <person name="de la Bastide M."/>
            <person name="Habermann K."/>
            <person name="Parnell L."/>
            <person name="Dedhia N."/>
            <person name="Gnoj L."/>
            <person name="Schutz K."/>
            <person name="Huang E."/>
            <person name="Spiegel L."/>
            <person name="Sekhon M."/>
            <person name="Murray J."/>
            <person name="Sheet P."/>
            <person name="Cordes M."/>
            <person name="Abu-Threideh J."/>
            <person name="Stoneking T."/>
            <person name="Kalicki J."/>
            <person name="Graves T."/>
            <person name="Harmon G."/>
            <person name="Edwards J."/>
            <person name="Latreille P."/>
            <person name="Courtney L."/>
            <person name="Cloud J."/>
            <person name="Abbott A."/>
            <person name="Scott K."/>
            <person name="Johnson D."/>
            <person name="Minx P."/>
            <person name="Bentley D."/>
            <person name="Fulton B."/>
            <person name="Miller N."/>
            <person name="Greco T."/>
            <person name="Kemp K."/>
            <person name="Kramer J."/>
            <person name="Fulton L."/>
            <person name="Mardis E."/>
            <person name="Dante M."/>
            <person name="Pepin K."/>
            <person name="Hillier L.W."/>
            <person name="Nelson J."/>
            <person name="Spieth J."/>
            <person name="Ryan E."/>
            <person name="Andrews S."/>
            <person name="Geisel C."/>
            <person name="Layman D."/>
            <person name="Du H."/>
            <person name="Ali J."/>
            <person name="Berghoff A."/>
            <person name="Jones K."/>
            <person name="Drone K."/>
            <person name="Cotton M."/>
            <person name="Joshu C."/>
            <person name="Antonoiu B."/>
            <person name="Zidanic M."/>
            <person name="Strong C."/>
            <person name="Sun H."/>
            <person name="Lamar B."/>
            <person name="Yordan C."/>
            <person name="Ma P."/>
            <person name="Zhong J."/>
            <person name="Preston R."/>
            <person name="Vil D."/>
            <person name="Shekher M."/>
            <person name="Matero A."/>
            <person name="Shah R."/>
            <person name="Swaby I.K."/>
            <person name="O'Shaughnessy A."/>
            <person name="Rodriguez M."/>
            <person name="Hoffman J."/>
            <person name="Till S."/>
            <person name="Granat S."/>
            <person name="Shohdy N."/>
            <person name="Hasegawa A."/>
            <person name="Hameed A."/>
            <person name="Lodhi M."/>
            <person name="Johnson A."/>
            <person name="Chen E."/>
            <person name="Marra M.A."/>
            <person name="Martienssen R."/>
            <person name="McCombie W.R."/>
        </authorList>
    </citation>
    <scope>NUCLEOTIDE SEQUENCE [LARGE SCALE GENOMIC DNA]</scope>
    <source>
        <strain>cv. Columbia</strain>
    </source>
</reference>
<reference key="2">
    <citation type="journal article" date="2017" name="Plant J.">
        <title>Araport11: a complete reannotation of the Arabidopsis thaliana reference genome.</title>
        <authorList>
            <person name="Cheng C.Y."/>
            <person name="Krishnakumar V."/>
            <person name="Chan A.P."/>
            <person name="Thibaud-Nissen F."/>
            <person name="Schobel S."/>
            <person name="Town C.D."/>
        </authorList>
    </citation>
    <scope>GENOME REANNOTATION</scope>
    <source>
        <strain>cv. Columbia</strain>
    </source>
</reference>
<reference key="3">
    <citation type="journal article" date="2000" name="Plant Mol. Biol.">
        <title>In Arabidopsis thaliana, 1% of the genome codes for a novel protein family unique to plants.</title>
        <authorList>
            <person name="Aubourg S."/>
            <person name="Boudet N."/>
            <person name="Kreis M."/>
            <person name="Lecharny A."/>
        </authorList>
    </citation>
    <scope>GENE FAMILY</scope>
</reference>
<reference key="4">
    <citation type="journal article" date="2004" name="Plant Cell">
        <title>Genome-wide analysis of Arabidopsis pentatricopeptide repeat proteins reveals their essential role in organelle biogenesis.</title>
        <authorList>
            <person name="Lurin C."/>
            <person name="Andres C."/>
            <person name="Aubourg S."/>
            <person name="Bellaoui M."/>
            <person name="Bitton F."/>
            <person name="Bruyere C."/>
            <person name="Caboche M."/>
            <person name="Debast C."/>
            <person name="Gualberto J."/>
            <person name="Hoffmann B."/>
            <person name="Lecharny A."/>
            <person name="Le Ret M."/>
            <person name="Martin-Magniette M.-L."/>
            <person name="Mireau H."/>
            <person name="Peeters N."/>
            <person name="Renou J.-P."/>
            <person name="Szurek B."/>
            <person name="Taconnat L."/>
            <person name="Small I."/>
        </authorList>
    </citation>
    <scope>GENE FAMILY</scope>
</reference>
<proteinExistence type="inferred from homology"/>
<sequence length="624" mass="69841">MRWVKLGRRVIMSRALSSRLNLELGNKLKGLVSDQFYDEALRLYKLKIHSLGTNGFTAILPSVIKACAFQQEPFLLGAQLHCLCLKAGADCDTVVSNSLISMYAKFSRKYAVRKVFDEMLHRDTVSYCSIINSCCQDGLLYEAMKLIKEMYFYGFIPKSELVASLLALCTRMGSSSKVARMFHALVLVDERMQESVLLSTALVDMYLKFDDHAAAFHVFDQMEVKNEVSWTAMISGCVANQNYEMGVDLFRAMQRENLRPNRVTLLSVLPACVELNYGSSLVKEIHGFSFRHGCHADERLTAAFMTMYCRCGNVSLSRVLFETSKVRDVVMWSSMISGYAETGDCSEVMNLLNQMRKEGIEANSVTLLAIVSACTNSTLLSFASTVHSQILKCGFMSHILLGNALIDMYAKCGSLSAAREVFYELTEKDLVSWSSMINAYGLHGHGSEALEIFKGMIKGGHEVDDMAFLAILSACNHAGLVEEAQTIFTQAGKYHMPVTLEHYACYINLLGRFGKIDDAFEVTINMPMKPSARIWSSLLSACETHGRLDVAGKIIANELMKSEPDNPANYVLLSKIHTESGNYHAAEEVRRVMQRRKLNKCYGFSKIEPELQIEDYQGKSWSPI</sequence>
<feature type="transit peptide" description="Mitochondrion" evidence="1">
    <location>
        <begin position="1"/>
        <end position="15"/>
    </location>
</feature>
<feature type="chain" id="PRO_0000363460" description="Pentatricopeptide repeat-containing protein At4g31070, mitochondrial">
    <location>
        <begin position="16"/>
        <end position="624"/>
    </location>
</feature>
<feature type="repeat" description="PPR 1">
    <location>
        <begin position="56"/>
        <end position="91"/>
    </location>
</feature>
<feature type="repeat" description="PPR 2">
    <location>
        <begin position="92"/>
        <end position="122"/>
    </location>
</feature>
<feature type="repeat" description="PPR 3">
    <location>
        <begin position="123"/>
        <end position="157"/>
    </location>
</feature>
<feature type="repeat" description="PPR 4">
    <location>
        <begin position="158"/>
        <end position="192"/>
    </location>
</feature>
<feature type="repeat" description="PPR 5">
    <location>
        <begin position="195"/>
        <end position="225"/>
    </location>
</feature>
<feature type="repeat" description="PPR 6">
    <location>
        <begin position="226"/>
        <end position="260"/>
    </location>
</feature>
<feature type="repeat" description="PPR 7">
    <location>
        <begin position="261"/>
        <end position="296"/>
    </location>
</feature>
<feature type="repeat" description="PPR 8">
    <location>
        <begin position="297"/>
        <end position="327"/>
    </location>
</feature>
<feature type="repeat" description="PPR 9">
    <location>
        <begin position="328"/>
        <end position="362"/>
    </location>
</feature>
<feature type="repeat" description="PPR 10">
    <location>
        <begin position="363"/>
        <end position="397"/>
    </location>
</feature>
<feature type="repeat" description="PPR 11">
    <location>
        <begin position="398"/>
        <end position="428"/>
    </location>
</feature>
<feature type="repeat" description="PPR 12">
    <location>
        <begin position="429"/>
        <end position="463"/>
    </location>
</feature>
<feature type="repeat" description="PPR 13">
    <location>
        <begin position="464"/>
        <end position="498"/>
    </location>
</feature>
<feature type="repeat" description="PPR 14">
    <location>
        <begin position="499"/>
        <end position="529"/>
    </location>
</feature>
<feature type="region of interest" description="Type E motif">
    <location>
        <begin position="534"/>
        <end position="610"/>
    </location>
</feature>
<evidence type="ECO:0000255" key="1"/>
<evidence type="ECO:0000305" key="2"/>
<accession>O65543</accession>
<accession>F4JR67</accession>
<organism>
    <name type="scientific">Arabidopsis thaliana</name>
    <name type="common">Mouse-ear cress</name>
    <dbReference type="NCBI Taxonomy" id="3702"/>
    <lineage>
        <taxon>Eukaryota</taxon>
        <taxon>Viridiplantae</taxon>
        <taxon>Streptophyta</taxon>
        <taxon>Embryophyta</taxon>
        <taxon>Tracheophyta</taxon>
        <taxon>Spermatophyta</taxon>
        <taxon>Magnoliopsida</taxon>
        <taxon>eudicotyledons</taxon>
        <taxon>Gunneridae</taxon>
        <taxon>Pentapetalae</taxon>
        <taxon>rosids</taxon>
        <taxon>malvids</taxon>
        <taxon>Brassicales</taxon>
        <taxon>Brassicaceae</taxon>
        <taxon>Camelineae</taxon>
        <taxon>Arabidopsis</taxon>
    </lineage>
</organism>
<keyword id="KW-0496">Mitochondrion</keyword>
<keyword id="KW-1185">Reference proteome</keyword>
<keyword id="KW-0677">Repeat</keyword>
<keyword id="KW-0809">Transit peptide</keyword>
<gene>
    <name type="primary">PCMP-E7</name>
    <name type="ordered locus">At4g31070</name>
    <name type="ORF">F6I18.20</name>
</gene>
<dbReference type="EMBL" id="AL022198">
    <property type="protein sequence ID" value="CAA18186.1"/>
    <property type="status" value="ALT_INIT"/>
    <property type="molecule type" value="Genomic_DNA"/>
</dbReference>
<dbReference type="EMBL" id="AL161578">
    <property type="protein sequence ID" value="CAB79825.1"/>
    <property type="status" value="ALT_INIT"/>
    <property type="molecule type" value="Genomic_DNA"/>
</dbReference>
<dbReference type="EMBL" id="CP002687">
    <property type="protein sequence ID" value="AEE85853.2"/>
    <property type="molecule type" value="Genomic_DNA"/>
</dbReference>
<dbReference type="EMBL" id="CP002687">
    <property type="protein sequence ID" value="ANM67009.1"/>
    <property type="molecule type" value="Genomic_DNA"/>
</dbReference>
<dbReference type="PIR" id="H85363">
    <property type="entry name" value="H85363"/>
</dbReference>
<dbReference type="RefSeq" id="NP_001320098.1">
    <property type="nucleotide sequence ID" value="NM_001342052.1"/>
</dbReference>
<dbReference type="RefSeq" id="NP_001328866.1">
    <property type="nucleotide sequence ID" value="NM_001342053.1"/>
</dbReference>
<dbReference type="SMR" id="O65543"/>
<dbReference type="FunCoup" id="O65543">
    <property type="interactions" value="108"/>
</dbReference>
<dbReference type="STRING" id="3702.O65543"/>
<dbReference type="PaxDb" id="3702-AT4G31070.1"/>
<dbReference type="ProteomicsDB" id="249241"/>
<dbReference type="EnsemblPlants" id="AT4G31070.1">
    <property type="protein sequence ID" value="AT4G31070.1"/>
    <property type="gene ID" value="AT4G31070"/>
</dbReference>
<dbReference type="EnsemblPlants" id="AT4G31070.2">
    <property type="protein sequence ID" value="AT4G31070.2"/>
    <property type="gene ID" value="AT4G31070"/>
</dbReference>
<dbReference type="GeneID" id="829234"/>
<dbReference type="Gramene" id="AT4G31070.1">
    <property type="protein sequence ID" value="AT4G31070.1"/>
    <property type="gene ID" value="AT4G31070"/>
</dbReference>
<dbReference type="Gramene" id="AT4G31070.2">
    <property type="protein sequence ID" value="AT4G31070.2"/>
    <property type="gene ID" value="AT4G31070"/>
</dbReference>
<dbReference type="KEGG" id="ath:AT4G31070"/>
<dbReference type="Araport" id="AT4G31070"/>
<dbReference type="TAIR" id="AT4G31070"/>
<dbReference type="eggNOG" id="KOG4197">
    <property type="taxonomic scope" value="Eukaryota"/>
</dbReference>
<dbReference type="HOGENOM" id="CLU_002706_15_10_1"/>
<dbReference type="InParanoid" id="O65543"/>
<dbReference type="OMA" id="ACYINLL"/>
<dbReference type="PhylomeDB" id="O65543"/>
<dbReference type="PRO" id="PR:O65543"/>
<dbReference type="Proteomes" id="UP000006548">
    <property type="component" value="Chromosome 4"/>
</dbReference>
<dbReference type="ExpressionAtlas" id="O65543">
    <property type="expression patterns" value="baseline and differential"/>
</dbReference>
<dbReference type="GO" id="GO:0005739">
    <property type="term" value="C:mitochondrion"/>
    <property type="evidence" value="ECO:0007669"/>
    <property type="project" value="UniProtKB-SubCell"/>
</dbReference>
<dbReference type="GO" id="GO:0003723">
    <property type="term" value="F:RNA binding"/>
    <property type="evidence" value="ECO:0007669"/>
    <property type="project" value="InterPro"/>
</dbReference>
<dbReference type="GO" id="GO:0009451">
    <property type="term" value="P:RNA modification"/>
    <property type="evidence" value="ECO:0007669"/>
    <property type="project" value="InterPro"/>
</dbReference>
<dbReference type="FunFam" id="1.25.40.10:FF:000090">
    <property type="entry name" value="Pentatricopeptide repeat-containing protein, chloroplastic"/>
    <property type="match status" value="1"/>
</dbReference>
<dbReference type="Gene3D" id="1.25.40.10">
    <property type="entry name" value="Tetratricopeptide repeat domain"/>
    <property type="match status" value="4"/>
</dbReference>
<dbReference type="InterPro" id="IPR046848">
    <property type="entry name" value="E_motif"/>
</dbReference>
<dbReference type="InterPro" id="IPR002885">
    <property type="entry name" value="Pentatricopeptide_rpt"/>
</dbReference>
<dbReference type="InterPro" id="IPR046960">
    <property type="entry name" value="PPR_At4g14850-like_plant"/>
</dbReference>
<dbReference type="InterPro" id="IPR011990">
    <property type="entry name" value="TPR-like_helical_dom_sf"/>
</dbReference>
<dbReference type="NCBIfam" id="TIGR00756">
    <property type="entry name" value="PPR"/>
    <property type="match status" value="4"/>
</dbReference>
<dbReference type="PANTHER" id="PTHR47926:SF544">
    <property type="entry name" value="PENTACOTRIPEPTIDE-REPEAT REGION OF PRORP DOMAIN-CONTAINING PROTEIN"/>
    <property type="match status" value="1"/>
</dbReference>
<dbReference type="PANTHER" id="PTHR47926">
    <property type="entry name" value="PENTATRICOPEPTIDE REPEAT-CONTAINING PROTEIN"/>
    <property type="match status" value="1"/>
</dbReference>
<dbReference type="Pfam" id="PF20431">
    <property type="entry name" value="E_motif"/>
    <property type="match status" value="1"/>
</dbReference>
<dbReference type="Pfam" id="PF01535">
    <property type="entry name" value="PPR"/>
    <property type="match status" value="2"/>
</dbReference>
<dbReference type="Pfam" id="PF12854">
    <property type="entry name" value="PPR_1"/>
    <property type="match status" value="1"/>
</dbReference>
<dbReference type="Pfam" id="PF13041">
    <property type="entry name" value="PPR_2"/>
    <property type="match status" value="2"/>
</dbReference>
<dbReference type="SUPFAM" id="SSF48452">
    <property type="entry name" value="TPR-like"/>
    <property type="match status" value="1"/>
</dbReference>
<dbReference type="PROSITE" id="PS51375">
    <property type="entry name" value="PPR"/>
    <property type="match status" value="12"/>
</dbReference>
<comment type="subcellular location">
    <subcellularLocation>
        <location evidence="2">Mitochondrion</location>
    </subcellularLocation>
</comment>
<comment type="similarity">
    <text evidence="2">Belongs to the PPR family. PCMP-E subfamily.</text>
</comment>
<comment type="sequence caution" evidence="2">
    <conflict type="erroneous initiation">
        <sequence resource="EMBL-CDS" id="CAA18186"/>
    </conflict>
    <text>Truncated N-terminus.</text>
</comment>
<comment type="sequence caution" evidence="2">
    <conflict type="erroneous initiation">
        <sequence resource="EMBL-CDS" id="CAB79825"/>
    </conflict>
    <text>Truncated N-terminus.</text>
</comment>
<comment type="online information" name="Pentatricopeptide repeat proteins">
    <link uri="https://ppr.plantenergy.uwa.edu.au"/>
</comment>